<evidence type="ECO:0000250" key="1"/>
<evidence type="ECO:0000305" key="2"/>
<comment type="function">
    <text evidence="1">Exhibits S-adenosyl-L-methionine-dependent methyltransferase activity.</text>
</comment>
<comment type="similarity">
    <text evidence="2">Belongs to the UPF0677 family.</text>
</comment>
<accession>P9WFI8</accession>
<accession>L0T365</accession>
<accession>O53686</accession>
<accession>Q7DA39</accession>
<proteinExistence type="inferred from homology"/>
<reference key="1">
    <citation type="journal article" date="2002" name="J. Bacteriol.">
        <title>Whole-genome comparison of Mycobacterium tuberculosis clinical and laboratory strains.</title>
        <authorList>
            <person name="Fleischmann R.D."/>
            <person name="Alland D."/>
            <person name="Eisen J.A."/>
            <person name="Carpenter L."/>
            <person name="White O."/>
            <person name="Peterson J.D."/>
            <person name="DeBoy R.T."/>
            <person name="Dodson R.J."/>
            <person name="Gwinn M.L."/>
            <person name="Haft D.H."/>
            <person name="Hickey E.K."/>
            <person name="Kolonay J.F."/>
            <person name="Nelson W.C."/>
            <person name="Umayam L.A."/>
            <person name="Ermolaeva M.D."/>
            <person name="Salzberg S.L."/>
            <person name="Delcher A."/>
            <person name="Utterback T.R."/>
            <person name="Weidman J.F."/>
            <person name="Khouri H.M."/>
            <person name="Gill J."/>
            <person name="Mikula A."/>
            <person name="Bishai W."/>
            <person name="Jacobs W.R. Jr."/>
            <person name="Venter J.C."/>
            <person name="Fraser C.M."/>
        </authorList>
    </citation>
    <scope>NUCLEOTIDE SEQUENCE [LARGE SCALE GENOMIC DNA]</scope>
    <source>
        <strain>CDC 1551 / Oshkosh</strain>
    </source>
</reference>
<gene>
    <name type="ordered locus">MT0293</name>
</gene>
<dbReference type="EC" id="2.1.1.-"/>
<dbReference type="EMBL" id="AE000516">
    <property type="protein sequence ID" value="AAK44517.1"/>
    <property type="molecule type" value="Genomic_DNA"/>
</dbReference>
<dbReference type="PIR" id="G70835">
    <property type="entry name" value="G70835"/>
</dbReference>
<dbReference type="RefSeq" id="WP_003401448.1">
    <property type="nucleotide sequence ID" value="NZ_KK341227.1"/>
</dbReference>
<dbReference type="SMR" id="P9WFI8"/>
<dbReference type="KEGG" id="mtc:MT0293"/>
<dbReference type="PATRIC" id="fig|83331.31.peg.317"/>
<dbReference type="HOGENOM" id="CLU_056160_2_1_11"/>
<dbReference type="Proteomes" id="UP000001020">
    <property type="component" value="Chromosome"/>
</dbReference>
<dbReference type="GO" id="GO:0008168">
    <property type="term" value="F:methyltransferase activity"/>
    <property type="evidence" value="ECO:0007669"/>
    <property type="project" value="UniProtKB-KW"/>
</dbReference>
<dbReference type="GO" id="GO:0032259">
    <property type="term" value="P:methylation"/>
    <property type="evidence" value="ECO:0007669"/>
    <property type="project" value="UniProtKB-KW"/>
</dbReference>
<dbReference type="FunFam" id="3.40.50.150:FF:000152">
    <property type="entry name" value="S-adenosyl-L-methionine-dependent methyltransferase"/>
    <property type="match status" value="1"/>
</dbReference>
<dbReference type="Gene3D" id="3.40.50.150">
    <property type="entry name" value="Vaccinia Virus protein VP39"/>
    <property type="match status" value="1"/>
</dbReference>
<dbReference type="InterPro" id="IPR007213">
    <property type="entry name" value="Ppm1/Ppm2/Tcmp"/>
</dbReference>
<dbReference type="InterPro" id="IPR029063">
    <property type="entry name" value="SAM-dependent_MTases_sf"/>
</dbReference>
<dbReference type="InterPro" id="IPR011610">
    <property type="entry name" value="SAM_mthyl_Trfase_ML2640-like"/>
</dbReference>
<dbReference type="NCBIfam" id="TIGR00027">
    <property type="entry name" value="mthyl_TIGR00027"/>
    <property type="match status" value="1"/>
</dbReference>
<dbReference type="PANTHER" id="PTHR43619">
    <property type="entry name" value="S-ADENOSYL-L-METHIONINE-DEPENDENT METHYLTRANSFERASE YKTD-RELATED"/>
    <property type="match status" value="1"/>
</dbReference>
<dbReference type="PANTHER" id="PTHR43619:SF2">
    <property type="entry name" value="S-ADENOSYL-L-METHIONINE-DEPENDENT METHYLTRANSFERASES SUPERFAMILY PROTEIN"/>
    <property type="match status" value="1"/>
</dbReference>
<dbReference type="Pfam" id="PF04072">
    <property type="entry name" value="LCM"/>
    <property type="match status" value="1"/>
</dbReference>
<dbReference type="SUPFAM" id="SSF53335">
    <property type="entry name" value="S-adenosyl-L-methionine-dependent methyltransferases"/>
    <property type="match status" value="1"/>
</dbReference>
<name>Y293_MYCTO</name>
<sequence length="302" mass="32998">MRTEGDSWDITTSVGSTALFVATARALEAQKSDPLVVDPYAEAFCRAVGGSWADVLDGKLPDHKLKSTDFGEHFVNFQGARTKYFDEYFRRAAAAGARQVVILAAGLDSRAYRLPWPDGTTVFELDRPQVLDFKREVLASHGAQPRALRREIAVDLRDDWPQALRDSGFDAAAPSAWIAEGLLIYLPATAQERLFTGIDALAGRRSHVAVEDGAPMGPDEYAAKVEEERAAIAEGAEEHPFFQLVYNERCAPAAEWFGERGWTAVATLLNDYLEAVGRPVPGPESEAGPMFARNTLVSAARV</sequence>
<protein>
    <recommendedName>
        <fullName>Putative S-adenosyl-L-methionine-dependent methyltransferase MT0293</fullName>
        <ecNumber>2.1.1.-</ecNumber>
    </recommendedName>
</protein>
<keyword id="KW-0489">Methyltransferase</keyword>
<keyword id="KW-1185">Reference proteome</keyword>
<keyword id="KW-0949">S-adenosyl-L-methionine</keyword>
<keyword id="KW-0808">Transferase</keyword>
<feature type="chain" id="PRO_0000428531" description="Putative S-adenosyl-L-methionine-dependent methyltransferase MT0293">
    <location>
        <begin position="1"/>
        <end position="302"/>
    </location>
</feature>
<feature type="binding site" evidence="1">
    <location>
        <position position="126"/>
    </location>
    <ligand>
        <name>S-adenosyl-L-methionine</name>
        <dbReference type="ChEBI" id="CHEBI:59789"/>
    </ligand>
</feature>
<feature type="binding site" evidence="1">
    <location>
        <begin position="155"/>
        <end position="156"/>
    </location>
    <ligand>
        <name>S-adenosyl-L-methionine</name>
        <dbReference type="ChEBI" id="CHEBI:59789"/>
    </ligand>
</feature>
<organism>
    <name type="scientific">Mycobacterium tuberculosis (strain CDC 1551 / Oshkosh)</name>
    <dbReference type="NCBI Taxonomy" id="83331"/>
    <lineage>
        <taxon>Bacteria</taxon>
        <taxon>Bacillati</taxon>
        <taxon>Actinomycetota</taxon>
        <taxon>Actinomycetes</taxon>
        <taxon>Mycobacteriales</taxon>
        <taxon>Mycobacteriaceae</taxon>
        <taxon>Mycobacterium</taxon>
        <taxon>Mycobacterium tuberculosis complex</taxon>
    </lineage>
</organism>